<organism>
    <name type="scientific">Thermococcus celer</name>
    <dbReference type="NCBI Taxonomy" id="2264"/>
    <lineage>
        <taxon>Archaea</taxon>
        <taxon>Methanobacteriati</taxon>
        <taxon>Methanobacteriota</taxon>
        <taxon>Thermococci</taxon>
        <taxon>Thermococcales</taxon>
        <taxon>Thermococcaceae</taxon>
        <taxon>Thermococcus</taxon>
    </lineage>
</organism>
<reference key="1">
    <citation type="journal article" date="1992" name="Nucleic Acids Res.">
        <title>Nucleotide sequence of the genes encoding the three largest subunits of the DNA-dependent RNA polymerase from the archaeum Thermococcus celer.</title>
        <authorList>
            <person name="Klenk H.-P."/>
            <person name="Schwass V."/>
            <person name="Lottspeich F."/>
            <person name="Zillig W."/>
        </authorList>
    </citation>
    <scope>NUCLEOTIDE SEQUENCE [GENOMIC DNA]</scope>
    <source>
        <strain>ATCC 35543 / DSM 2476 / JCM 8558 / Vu 13</strain>
    </source>
</reference>
<reference key="2">
    <citation type="journal article" date="1991" name="Nucleic Acids Res.">
        <title>Nucleotide sequence of the genes encoding the L30, S12 and S7 equivalent ribosomal proteins from the archaeum Thermococcus celer.</title>
        <authorList>
            <person name="Klenk H.-P."/>
            <person name="Schwass V."/>
            <person name="Zillig W."/>
        </authorList>
    </citation>
    <scope>NUCLEOTIDE SEQUENCE [GENOMIC DNA] OF 195-393</scope>
    <source>
        <strain>ATCC 35543 / DSM 2476 / JCM 8558 / Vu 13</strain>
    </source>
</reference>
<name>RPO1C_THECE</name>
<dbReference type="EC" id="2.7.7.6" evidence="1"/>
<dbReference type="EMBL" id="X67313">
    <property type="protein sequence ID" value="CAA47724.1"/>
    <property type="molecule type" value="Genomic_DNA"/>
</dbReference>
<dbReference type="EMBL" id="X60305">
    <property type="protein sequence ID" value="CAA42846.1"/>
    <property type="molecule type" value="Genomic_DNA"/>
</dbReference>
<dbReference type="PIR" id="S25565">
    <property type="entry name" value="S25565"/>
</dbReference>
<dbReference type="SMR" id="P29158"/>
<dbReference type="GO" id="GO:0005737">
    <property type="term" value="C:cytoplasm"/>
    <property type="evidence" value="ECO:0007669"/>
    <property type="project" value="UniProtKB-SubCell"/>
</dbReference>
<dbReference type="GO" id="GO:0000428">
    <property type="term" value="C:DNA-directed RNA polymerase complex"/>
    <property type="evidence" value="ECO:0007669"/>
    <property type="project" value="UniProtKB-KW"/>
</dbReference>
<dbReference type="GO" id="GO:0003677">
    <property type="term" value="F:DNA binding"/>
    <property type="evidence" value="ECO:0007669"/>
    <property type="project" value="UniProtKB-UniRule"/>
</dbReference>
<dbReference type="GO" id="GO:0003899">
    <property type="term" value="F:DNA-directed RNA polymerase activity"/>
    <property type="evidence" value="ECO:0007669"/>
    <property type="project" value="UniProtKB-UniRule"/>
</dbReference>
<dbReference type="GO" id="GO:0006351">
    <property type="term" value="P:DNA-templated transcription"/>
    <property type="evidence" value="ECO:0007669"/>
    <property type="project" value="UniProtKB-UniRule"/>
</dbReference>
<dbReference type="CDD" id="cd06528">
    <property type="entry name" value="RNAP_A"/>
    <property type="match status" value="1"/>
</dbReference>
<dbReference type="Gene3D" id="1.10.150.390">
    <property type="match status" value="1"/>
</dbReference>
<dbReference type="HAMAP" id="MF_00411">
    <property type="entry name" value="RNApol_arch_Rpo1C"/>
    <property type="match status" value="1"/>
</dbReference>
<dbReference type="InterPro" id="IPR045867">
    <property type="entry name" value="DNA-dir_RpoC_beta_prime"/>
</dbReference>
<dbReference type="InterPro" id="IPR007081">
    <property type="entry name" value="RNA_pol_Rpb1_5"/>
</dbReference>
<dbReference type="InterPro" id="IPR012757">
    <property type="entry name" value="RPO1C"/>
</dbReference>
<dbReference type="NCBIfam" id="TIGR02389">
    <property type="entry name" value="RNA_pol_rpoA2"/>
    <property type="match status" value="1"/>
</dbReference>
<dbReference type="PANTHER" id="PTHR19376">
    <property type="entry name" value="DNA-DIRECTED RNA POLYMERASE"/>
    <property type="match status" value="1"/>
</dbReference>
<dbReference type="PANTHER" id="PTHR19376:SF32">
    <property type="entry name" value="DNA-DIRECTED RNA POLYMERASE III SUBUNIT RPC1"/>
    <property type="match status" value="1"/>
</dbReference>
<dbReference type="Pfam" id="PF04998">
    <property type="entry name" value="RNA_pol_Rpb1_5"/>
    <property type="match status" value="1"/>
</dbReference>
<dbReference type="SUPFAM" id="SSF64484">
    <property type="entry name" value="beta and beta-prime subunits of DNA dependent RNA-polymerase"/>
    <property type="match status" value="1"/>
</dbReference>
<gene>
    <name evidence="1" type="primary">rpo1C</name>
    <name evidence="1" type="synonym">rpoA2</name>
</gene>
<keyword id="KW-0963">Cytoplasm</keyword>
<keyword id="KW-0238">DNA-binding</keyword>
<keyword id="KW-0240">DNA-directed RNA polymerase</keyword>
<keyword id="KW-0548">Nucleotidyltransferase</keyword>
<keyword id="KW-0804">Transcription</keyword>
<keyword id="KW-0808">Transferase</keyword>
<accession>P29158</accession>
<comment type="function">
    <text evidence="1">DNA-dependent RNA polymerase (RNAP) catalyzes the transcription of DNA into RNA using the four ribonucleoside triphosphates as substrates. Forms part of the jaw domain.</text>
</comment>
<comment type="catalytic activity">
    <reaction evidence="1">
        <text>RNA(n) + a ribonucleoside 5'-triphosphate = RNA(n+1) + diphosphate</text>
        <dbReference type="Rhea" id="RHEA:21248"/>
        <dbReference type="Rhea" id="RHEA-COMP:14527"/>
        <dbReference type="Rhea" id="RHEA-COMP:17342"/>
        <dbReference type="ChEBI" id="CHEBI:33019"/>
        <dbReference type="ChEBI" id="CHEBI:61557"/>
        <dbReference type="ChEBI" id="CHEBI:140395"/>
        <dbReference type="EC" id="2.7.7.6"/>
    </reaction>
</comment>
<comment type="subunit">
    <text evidence="1">Part of the RNA polymerase complex.</text>
</comment>
<comment type="subcellular location">
    <subcellularLocation>
        <location evidence="1">Cytoplasm</location>
    </subcellularLocation>
</comment>
<comment type="similarity">
    <text evidence="1">Belongs to the RNA polymerase beta' chain family.</text>
</comment>
<sequence length="393" mass="43888">MVAAKTIKGMVDKAELPDNIKEELYAKLIEYNKKYKLKKAEVQAIIDETVKEYQKALIEPGEAIGTVAAQSIGEPSTQMTLNTFHYAGVAEINVTLGLPRIIEIVDARKNPSTPIMTVYLDEEHRYDREKALEVARRIEGTSLENLARETTIDILNFEFIVEIDPERLEKAGLDMERIQRKLESSFKSAEFEVDGYTVIMRPKKVGKISSLRRLAEKVKKHRLKGLSRVGKTVITKDSKTGEYIIRTEGSNFKQVLKVPGVDPTRTRTNDIREIAEVLGIEAARNAIIDEILKTMEEQGLEVDVRHIMLVADMMTLDGVIRPIGRHGIVGEKASVLARAAFEITTQHLFEAAERGAVDPLNGVVENVLIGQPVPVGTGTVKLAMNLPLRPKRE</sequence>
<protein>
    <recommendedName>
        <fullName evidence="1">DNA-directed RNA polymerase subunit Rpo1C</fullName>
        <ecNumber evidence="1">2.7.7.6</ecNumber>
    </recommendedName>
    <alternativeName>
        <fullName evidence="1">DNA-directed RNA polymerase subunit A''</fullName>
    </alternativeName>
</protein>
<feature type="chain" id="PRO_0000074029" description="DNA-directed RNA polymerase subunit Rpo1C">
    <location>
        <begin position="1"/>
        <end position="393"/>
    </location>
</feature>
<proteinExistence type="inferred from homology"/>
<evidence type="ECO:0000255" key="1">
    <source>
        <dbReference type="HAMAP-Rule" id="MF_00411"/>
    </source>
</evidence>